<evidence type="ECO:0000255" key="1">
    <source>
        <dbReference type="HAMAP-Rule" id="MF_01685"/>
    </source>
</evidence>
<sequence>MIKTDALIIGAGPTGLFCAHQLGLIGLNCEIVDNLDKIGGQCIELYPDKPIYDIPAVPECTGEELTNNLIKQIKPFNIKFHLNERVEEVNKVNNKWIVKTNKKKEFVTPNIIIAGGVGSFEPRKFSPKECEKYENRSLFYSIKDKTIFQDKTISIFGGGDSALDWAIELSKSSYVNLIHRRDEFTGAQLSIDKIKELEKSGKLKIYTKYQLNSVKGEQNIKSIEIKHDDESLKELETNYVLGFFGLIMKLGPIVDWGLNLDKKTIPVNTENFETNLNGIFAIGDICTYPGKLKLILSGFHEGALAARGCFKYARPDEKLRFEFTTTSKAAQERLGVKK</sequence>
<protein>
    <recommendedName>
        <fullName evidence="1">Ferredoxin--NADP reductase</fullName>
        <shortName evidence="1">FNR</shortName>
        <shortName evidence="1">Fd-NADP(+) reductase</shortName>
        <ecNumber evidence="1">1.18.1.2</ecNumber>
    </recommendedName>
</protein>
<comment type="catalytic activity">
    <reaction evidence="1">
        <text>2 reduced [2Fe-2S]-[ferredoxin] + NADP(+) + H(+) = 2 oxidized [2Fe-2S]-[ferredoxin] + NADPH</text>
        <dbReference type="Rhea" id="RHEA:20125"/>
        <dbReference type="Rhea" id="RHEA-COMP:10000"/>
        <dbReference type="Rhea" id="RHEA-COMP:10001"/>
        <dbReference type="ChEBI" id="CHEBI:15378"/>
        <dbReference type="ChEBI" id="CHEBI:33737"/>
        <dbReference type="ChEBI" id="CHEBI:33738"/>
        <dbReference type="ChEBI" id="CHEBI:57783"/>
        <dbReference type="ChEBI" id="CHEBI:58349"/>
        <dbReference type="EC" id="1.18.1.2"/>
    </reaction>
</comment>
<comment type="cofactor">
    <cofactor evidence="1">
        <name>FAD</name>
        <dbReference type="ChEBI" id="CHEBI:57692"/>
    </cofactor>
    <text evidence="1">Binds 1 FAD per subunit.</text>
</comment>
<comment type="subunit">
    <text evidence="1">Homodimer.</text>
</comment>
<comment type="similarity">
    <text evidence="1">Belongs to the ferredoxin--NADP reductase type 2 family.</text>
</comment>
<organism>
    <name type="scientific">Pelagibacter ubique (strain HTCC1062)</name>
    <dbReference type="NCBI Taxonomy" id="335992"/>
    <lineage>
        <taxon>Bacteria</taxon>
        <taxon>Pseudomonadati</taxon>
        <taxon>Pseudomonadota</taxon>
        <taxon>Alphaproteobacteria</taxon>
        <taxon>Candidatus Pelagibacterales</taxon>
        <taxon>Candidatus Pelagibacteraceae</taxon>
        <taxon>Candidatus Pelagibacter</taxon>
    </lineage>
</organism>
<reference key="1">
    <citation type="journal article" date="2005" name="Science">
        <title>Genome streamlining in a cosmopolitan oceanic bacterium.</title>
        <authorList>
            <person name="Giovannoni S.J."/>
            <person name="Tripp H.J."/>
            <person name="Givan S."/>
            <person name="Podar M."/>
            <person name="Vergin K.L."/>
            <person name="Baptista D."/>
            <person name="Bibbs L."/>
            <person name="Eads J."/>
            <person name="Richardson T.H."/>
            <person name="Noordewier M."/>
            <person name="Rappe M.S."/>
            <person name="Short J.M."/>
            <person name="Carrington J.C."/>
            <person name="Mathur E.J."/>
        </authorList>
    </citation>
    <scope>NUCLEOTIDE SEQUENCE [LARGE SCALE GENOMIC DNA]</scope>
    <source>
        <strain>HTCC1062</strain>
    </source>
</reference>
<gene>
    <name type="ordered locus">SAR11_0627</name>
</gene>
<keyword id="KW-0274">FAD</keyword>
<keyword id="KW-0285">Flavoprotein</keyword>
<keyword id="KW-0521">NADP</keyword>
<keyword id="KW-0560">Oxidoreductase</keyword>
<keyword id="KW-1185">Reference proteome</keyword>
<accession>Q4FMZ1</accession>
<dbReference type="EC" id="1.18.1.2" evidence="1"/>
<dbReference type="EMBL" id="CP000084">
    <property type="protein sequence ID" value="AAZ21448.1"/>
    <property type="molecule type" value="Genomic_DNA"/>
</dbReference>
<dbReference type="RefSeq" id="WP_011281821.1">
    <property type="nucleotide sequence ID" value="NC_007205.1"/>
</dbReference>
<dbReference type="SMR" id="Q4FMZ1"/>
<dbReference type="STRING" id="335992.SAR11_0627"/>
<dbReference type="GeneID" id="66295133"/>
<dbReference type="KEGG" id="pub:SAR11_0627"/>
<dbReference type="eggNOG" id="COG0492">
    <property type="taxonomic scope" value="Bacteria"/>
</dbReference>
<dbReference type="HOGENOM" id="CLU_031864_5_5_5"/>
<dbReference type="OrthoDB" id="9806179at2"/>
<dbReference type="Proteomes" id="UP000002528">
    <property type="component" value="Chromosome"/>
</dbReference>
<dbReference type="GO" id="GO:0004324">
    <property type="term" value="F:ferredoxin-NADP+ reductase activity"/>
    <property type="evidence" value="ECO:0007669"/>
    <property type="project" value="UniProtKB-UniRule"/>
</dbReference>
<dbReference type="GO" id="GO:0050660">
    <property type="term" value="F:flavin adenine dinucleotide binding"/>
    <property type="evidence" value="ECO:0007669"/>
    <property type="project" value="UniProtKB-UniRule"/>
</dbReference>
<dbReference type="GO" id="GO:0050661">
    <property type="term" value="F:NADP binding"/>
    <property type="evidence" value="ECO:0007669"/>
    <property type="project" value="UniProtKB-UniRule"/>
</dbReference>
<dbReference type="Gene3D" id="3.50.50.60">
    <property type="entry name" value="FAD/NAD(P)-binding domain"/>
    <property type="match status" value="2"/>
</dbReference>
<dbReference type="HAMAP" id="MF_01685">
    <property type="entry name" value="FENR2"/>
    <property type="match status" value="1"/>
</dbReference>
<dbReference type="InterPro" id="IPR036188">
    <property type="entry name" value="FAD/NAD-bd_sf"/>
</dbReference>
<dbReference type="InterPro" id="IPR022890">
    <property type="entry name" value="Fd--NADP_Rdtase_type_2"/>
</dbReference>
<dbReference type="InterPro" id="IPR050097">
    <property type="entry name" value="Ferredoxin-NADP_redctase_2"/>
</dbReference>
<dbReference type="PANTHER" id="PTHR48105">
    <property type="entry name" value="THIOREDOXIN REDUCTASE 1-RELATED-RELATED"/>
    <property type="match status" value="1"/>
</dbReference>
<dbReference type="Pfam" id="PF13450">
    <property type="entry name" value="NAD_binding_8"/>
    <property type="match status" value="1"/>
</dbReference>
<dbReference type="Pfam" id="PF13738">
    <property type="entry name" value="Pyr_redox_3"/>
    <property type="match status" value="1"/>
</dbReference>
<dbReference type="PRINTS" id="PR00368">
    <property type="entry name" value="FADPNR"/>
</dbReference>
<dbReference type="PRINTS" id="PR00469">
    <property type="entry name" value="PNDRDTASEII"/>
</dbReference>
<dbReference type="SUPFAM" id="SSF51905">
    <property type="entry name" value="FAD/NAD(P)-binding domain"/>
    <property type="match status" value="2"/>
</dbReference>
<proteinExistence type="inferred from homology"/>
<name>FENR_PELUB</name>
<feature type="chain" id="PRO_0000364895" description="Ferredoxin--NADP reductase">
    <location>
        <begin position="1"/>
        <end position="338"/>
    </location>
</feature>
<feature type="binding site" evidence="1">
    <location>
        <position position="14"/>
    </location>
    <ligand>
        <name>FAD</name>
        <dbReference type="ChEBI" id="CHEBI:57692"/>
    </ligand>
</feature>
<feature type="binding site" evidence="1">
    <location>
        <position position="33"/>
    </location>
    <ligand>
        <name>FAD</name>
        <dbReference type="ChEBI" id="CHEBI:57692"/>
    </ligand>
</feature>
<feature type="binding site" evidence="1">
    <location>
        <position position="41"/>
    </location>
    <ligand>
        <name>FAD</name>
        <dbReference type="ChEBI" id="CHEBI:57692"/>
    </ligand>
</feature>
<feature type="binding site" evidence="1">
    <location>
        <position position="46"/>
    </location>
    <ligand>
        <name>FAD</name>
        <dbReference type="ChEBI" id="CHEBI:57692"/>
    </ligand>
</feature>
<feature type="binding site" evidence="1">
    <location>
        <position position="86"/>
    </location>
    <ligand>
        <name>FAD</name>
        <dbReference type="ChEBI" id="CHEBI:57692"/>
    </ligand>
</feature>
<feature type="binding site" evidence="1">
    <location>
        <position position="120"/>
    </location>
    <ligand>
        <name>FAD</name>
        <dbReference type="ChEBI" id="CHEBI:57692"/>
    </ligand>
</feature>
<feature type="binding site" evidence="1">
    <location>
        <position position="284"/>
    </location>
    <ligand>
        <name>FAD</name>
        <dbReference type="ChEBI" id="CHEBI:57692"/>
    </ligand>
</feature>
<feature type="binding site" evidence="1">
    <location>
        <position position="325"/>
    </location>
    <ligand>
        <name>FAD</name>
        <dbReference type="ChEBI" id="CHEBI:57692"/>
    </ligand>
</feature>